<sequence>MSKLAELQAETREIIEDLLNDGSEPNALYIIEHHIAHHDFDLLEKIAVDAFKAGYEVSEAEEFKDDDGKPIFCFDIISEVELKAEIIDAQQKEILPLLEKHNGIYDGWGTYFEDPNADDDEYGDDGEFLDDEDEYGDDGEFFDDEDEEEPRVH</sequence>
<reference key="1">
    <citation type="journal article" date="1995" name="Science">
        <title>Whole-genome random sequencing and assembly of Haemophilus influenzae Rd.</title>
        <authorList>
            <person name="Fleischmann R.D."/>
            <person name="Adams M.D."/>
            <person name="White O."/>
            <person name="Clayton R.A."/>
            <person name="Kirkness E.F."/>
            <person name="Kerlavage A.R."/>
            <person name="Bult C.J."/>
            <person name="Tomb J.-F."/>
            <person name="Dougherty B.A."/>
            <person name="Merrick J.M."/>
            <person name="McKenney K."/>
            <person name="Sutton G.G."/>
            <person name="FitzHugh W."/>
            <person name="Fields C.A."/>
            <person name="Gocayne J.D."/>
            <person name="Scott J.D."/>
            <person name="Shirley R."/>
            <person name="Liu L.-I."/>
            <person name="Glodek A."/>
            <person name="Kelley J.M."/>
            <person name="Weidman J.F."/>
            <person name="Phillips C.A."/>
            <person name="Spriggs T."/>
            <person name="Hedblom E."/>
            <person name="Cotton M.D."/>
            <person name="Utterback T.R."/>
            <person name="Hanna M.C."/>
            <person name="Nguyen D.T."/>
            <person name="Saudek D.M."/>
            <person name="Brandon R.C."/>
            <person name="Fine L.D."/>
            <person name="Fritchman J.L."/>
            <person name="Fuhrmann J.L."/>
            <person name="Geoghagen N.S.M."/>
            <person name="Gnehm C.L."/>
            <person name="McDonald L.A."/>
            <person name="Small K.V."/>
            <person name="Fraser C.M."/>
            <person name="Smith H.O."/>
            <person name="Venter J.C."/>
        </authorList>
    </citation>
    <scope>NUCLEOTIDE SEQUENCE [LARGE SCALE GENOMIC DNA]</scope>
    <source>
        <strain>ATCC 51907 / DSM 11121 / KW20 / Rd</strain>
    </source>
</reference>
<reference key="2">
    <citation type="journal article" date="2000" name="Electrophoresis">
        <title>Two-dimensional map of the proteome of Haemophilus influenzae.</title>
        <authorList>
            <person name="Langen H."/>
            <person name="Takacs B."/>
            <person name="Evers S."/>
            <person name="Berndt P."/>
            <person name="Lahm H.W."/>
            <person name="Wipf B."/>
            <person name="Gray C."/>
            <person name="Fountoulakis M."/>
        </authorList>
    </citation>
    <scope>IDENTIFICATION BY MASS SPECTROMETRY</scope>
    <source>
        <strain>ATCC 51907 / DSM 11121 / KW20 / Rd</strain>
    </source>
</reference>
<protein>
    <recommendedName>
        <fullName evidence="1">Regulator of ribonuclease activity B</fullName>
    </recommendedName>
</protein>
<organism>
    <name type="scientific">Haemophilus influenzae (strain ATCC 51907 / DSM 11121 / KW20 / Rd)</name>
    <dbReference type="NCBI Taxonomy" id="71421"/>
    <lineage>
        <taxon>Bacteria</taxon>
        <taxon>Pseudomonadati</taxon>
        <taxon>Pseudomonadota</taxon>
        <taxon>Gammaproteobacteria</taxon>
        <taxon>Pasteurellales</taxon>
        <taxon>Pasteurellaceae</taxon>
        <taxon>Haemophilus</taxon>
    </lineage>
</organism>
<comment type="function">
    <text evidence="1">Globally modulates RNA abundance by binding to RNase E (Rne) and regulating its endonucleolytic activity. Can modulate Rne action in a substrate-dependent manner by altering the composition of the degradosome.</text>
</comment>
<comment type="subunit">
    <text evidence="1">Interacts with the C-terminal region of Rne.</text>
</comment>
<comment type="subcellular location">
    <subcellularLocation>
        <location evidence="1">Cytoplasm</location>
    </subcellularLocation>
</comment>
<comment type="similarity">
    <text evidence="1">Belongs to the RraB family.</text>
</comment>
<gene>
    <name evidence="1" type="primary">rraB</name>
    <name type="ordered locus">HI_0700</name>
</gene>
<accession>P44831</accession>
<evidence type="ECO:0000255" key="1">
    <source>
        <dbReference type="HAMAP-Rule" id="MF_01888"/>
    </source>
</evidence>
<evidence type="ECO:0000256" key="2">
    <source>
        <dbReference type="SAM" id="MobiDB-lite"/>
    </source>
</evidence>
<proteinExistence type="evidence at protein level"/>
<feature type="chain" id="PRO_0000169764" description="Regulator of ribonuclease activity B">
    <location>
        <begin position="1"/>
        <end position="153"/>
    </location>
</feature>
<feature type="region of interest" description="Disordered" evidence="2">
    <location>
        <begin position="114"/>
        <end position="153"/>
    </location>
</feature>
<feature type="compositionally biased region" description="Acidic residues" evidence="2">
    <location>
        <begin position="115"/>
        <end position="153"/>
    </location>
</feature>
<dbReference type="EMBL" id="L42023">
    <property type="protein sequence ID" value="AAC22359.1"/>
    <property type="molecule type" value="Genomic_DNA"/>
</dbReference>
<dbReference type="PIR" id="T09405">
    <property type="entry name" value="T09405"/>
</dbReference>
<dbReference type="RefSeq" id="NP_438859.1">
    <property type="nucleotide sequence ID" value="NC_000907.1"/>
</dbReference>
<dbReference type="SMR" id="P44831"/>
<dbReference type="STRING" id="71421.HI_0700"/>
<dbReference type="EnsemblBacteria" id="AAC22359">
    <property type="protein sequence ID" value="AAC22359"/>
    <property type="gene ID" value="HI_0700"/>
</dbReference>
<dbReference type="KEGG" id="hin:HI_0700"/>
<dbReference type="PATRIC" id="fig|71421.8.peg.731"/>
<dbReference type="eggNOG" id="COG3076">
    <property type="taxonomic scope" value="Bacteria"/>
</dbReference>
<dbReference type="HOGENOM" id="CLU_128640_0_0_6"/>
<dbReference type="OrthoDB" id="7065464at2"/>
<dbReference type="PhylomeDB" id="P44831"/>
<dbReference type="BioCyc" id="HINF71421:G1GJ1-734-MONOMER"/>
<dbReference type="Proteomes" id="UP000000579">
    <property type="component" value="Chromosome"/>
</dbReference>
<dbReference type="GO" id="GO:0005737">
    <property type="term" value="C:cytoplasm"/>
    <property type="evidence" value="ECO:0007669"/>
    <property type="project" value="UniProtKB-SubCell"/>
</dbReference>
<dbReference type="GO" id="GO:0060698">
    <property type="term" value="F:endoribonuclease inhibitor activity"/>
    <property type="evidence" value="ECO:0007669"/>
    <property type="project" value="UniProtKB-UniRule"/>
</dbReference>
<dbReference type="GO" id="GO:0019899">
    <property type="term" value="F:enzyme binding"/>
    <property type="evidence" value="ECO:0007669"/>
    <property type="project" value="UniProtKB-UniRule"/>
</dbReference>
<dbReference type="Gene3D" id="3.30.70.970">
    <property type="entry name" value="RraB-like"/>
    <property type="match status" value="1"/>
</dbReference>
<dbReference type="HAMAP" id="MF_01888">
    <property type="entry name" value="RraB"/>
    <property type="match status" value="1"/>
</dbReference>
<dbReference type="InterPro" id="IPR016716">
    <property type="entry name" value="RraB"/>
</dbReference>
<dbReference type="InterPro" id="IPR036701">
    <property type="entry name" value="RraB-like_sf"/>
</dbReference>
<dbReference type="InterPro" id="IPR009671">
    <property type="entry name" value="RraB_dom"/>
</dbReference>
<dbReference type="NCBIfam" id="NF008393">
    <property type="entry name" value="PRK11191.1"/>
    <property type="match status" value="1"/>
</dbReference>
<dbReference type="Pfam" id="PF06877">
    <property type="entry name" value="RraB"/>
    <property type="match status" value="1"/>
</dbReference>
<dbReference type="PIRSF" id="PIRSF018193">
    <property type="entry name" value="UCP018193"/>
    <property type="match status" value="1"/>
</dbReference>
<dbReference type="SUPFAM" id="SSF89946">
    <property type="entry name" value="Hypothetical protein VC0424"/>
    <property type="match status" value="1"/>
</dbReference>
<name>RRAB_HAEIN</name>
<keyword id="KW-0963">Cytoplasm</keyword>
<keyword id="KW-1185">Reference proteome</keyword>